<proteinExistence type="inferred from homology"/>
<comment type="function">
    <text evidence="1">Cell wall formation.</text>
</comment>
<comment type="catalytic activity">
    <reaction evidence="1">
        <text>UDP-N-acetyl-alpha-D-muramate + NADP(+) = UDP-N-acetyl-3-O-(1-carboxyvinyl)-alpha-D-glucosamine + NADPH + H(+)</text>
        <dbReference type="Rhea" id="RHEA:12248"/>
        <dbReference type="ChEBI" id="CHEBI:15378"/>
        <dbReference type="ChEBI" id="CHEBI:57783"/>
        <dbReference type="ChEBI" id="CHEBI:58349"/>
        <dbReference type="ChEBI" id="CHEBI:68483"/>
        <dbReference type="ChEBI" id="CHEBI:70757"/>
        <dbReference type="EC" id="1.3.1.98"/>
    </reaction>
</comment>
<comment type="cofactor">
    <cofactor evidence="1">
        <name>FAD</name>
        <dbReference type="ChEBI" id="CHEBI:57692"/>
    </cofactor>
</comment>
<comment type="pathway">
    <text evidence="1">Cell wall biogenesis; peptidoglycan biosynthesis.</text>
</comment>
<comment type="subcellular location">
    <subcellularLocation>
        <location evidence="1">Cytoplasm</location>
    </subcellularLocation>
</comment>
<comment type="similarity">
    <text evidence="1">Belongs to the MurB family.</text>
</comment>
<reference key="1">
    <citation type="submission" date="2005-09" db="EMBL/GenBank/DDBJ databases">
        <title>Complete sequence of chromosome 1 of Rhodobacter sphaeroides 2.4.1.</title>
        <authorList>
            <person name="Copeland A."/>
            <person name="Lucas S."/>
            <person name="Lapidus A."/>
            <person name="Barry K."/>
            <person name="Detter J.C."/>
            <person name="Glavina T."/>
            <person name="Hammon N."/>
            <person name="Israni S."/>
            <person name="Pitluck S."/>
            <person name="Richardson P."/>
            <person name="Mackenzie C."/>
            <person name="Choudhary M."/>
            <person name="Larimer F."/>
            <person name="Hauser L.J."/>
            <person name="Land M."/>
            <person name="Donohue T.J."/>
            <person name="Kaplan S."/>
        </authorList>
    </citation>
    <scope>NUCLEOTIDE SEQUENCE [LARGE SCALE GENOMIC DNA]</scope>
    <source>
        <strain>ATCC 17023 / DSM 158 / JCM 6121 / CCUG 31486 / LMG 2827 / NBRC 12203 / NCIMB 8253 / ATH 2.4.1.</strain>
    </source>
</reference>
<organism>
    <name type="scientific">Cereibacter sphaeroides (strain ATCC 17023 / DSM 158 / JCM 6121 / CCUG 31486 / LMG 2827 / NBRC 12203 / NCIMB 8253 / ATH 2.4.1.)</name>
    <name type="common">Rhodobacter sphaeroides</name>
    <dbReference type="NCBI Taxonomy" id="272943"/>
    <lineage>
        <taxon>Bacteria</taxon>
        <taxon>Pseudomonadati</taxon>
        <taxon>Pseudomonadota</taxon>
        <taxon>Alphaproteobacteria</taxon>
        <taxon>Rhodobacterales</taxon>
        <taxon>Paracoccaceae</taxon>
        <taxon>Cereibacter</taxon>
    </lineage>
</organism>
<evidence type="ECO:0000255" key="1">
    <source>
        <dbReference type="HAMAP-Rule" id="MF_00037"/>
    </source>
</evidence>
<evidence type="ECO:0000256" key="2">
    <source>
        <dbReference type="SAM" id="MobiDB-lite"/>
    </source>
</evidence>
<protein>
    <recommendedName>
        <fullName evidence="1">UDP-N-acetylenolpyruvoylglucosamine reductase</fullName>
        <ecNumber evidence="1">1.3.1.98</ecNumber>
    </recommendedName>
    <alternativeName>
        <fullName evidence="1">UDP-N-acetylmuramate dehydrogenase</fullName>
    </alternativeName>
</protein>
<accession>Q3J4L9</accession>
<sequence length="308" mass="32862">MMPPVRGTLTQGRSLADLTWLRVGGPADWLFQPADEADLVQFLGALDPAVPVFPMGVGSNLIVRDGGLRAVVIRLGRGFNAIRIEGDRVIAGAAALDAHVARHAADAGRDLTFLRTIPGSIGGAVRMNAGCYGSYVADHLIEVRAVTREGRPVTLPAAELGLAYRQSALPEGCVLTEATFRAEAGDPAALARRMDEQIARRDSSQPTKERSAGSTFRNPAGFSSTGRADDTHELKAWKLIDEAGLRGARRGGAQMSEMHSNFLINAGGATAADLEGLGEEVIKRVFQSSGIRLEWEIMRVGELPVNKE</sequence>
<name>MURB_CERS4</name>
<dbReference type="EC" id="1.3.1.98" evidence="1"/>
<dbReference type="EMBL" id="CP000143">
    <property type="protein sequence ID" value="ABA78265.1"/>
    <property type="molecule type" value="Genomic_DNA"/>
</dbReference>
<dbReference type="RefSeq" id="WP_011337243.1">
    <property type="nucleotide sequence ID" value="NC_007493.2"/>
</dbReference>
<dbReference type="RefSeq" id="YP_352166.1">
    <property type="nucleotide sequence ID" value="NC_007493.2"/>
</dbReference>
<dbReference type="SMR" id="Q3J4L9"/>
<dbReference type="STRING" id="272943.RSP_2110"/>
<dbReference type="EnsemblBacteria" id="ABA78265">
    <property type="protein sequence ID" value="ABA78265"/>
    <property type="gene ID" value="RSP_2110"/>
</dbReference>
<dbReference type="GeneID" id="3719581"/>
<dbReference type="KEGG" id="rsp:RSP_2110"/>
<dbReference type="PATRIC" id="fig|272943.9.peg.1003"/>
<dbReference type="eggNOG" id="COG0812">
    <property type="taxonomic scope" value="Bacteria"/>
</dbReference>
<dbReference type="OrthoDB" id="9804753at2"/>
<dbReference type="PhylomeDB" id="Q3J4L9"/>
<dbReference type="UniPathway" id="UPA00219"/>
<dbReference type="Proteomes" id="UP000002703">
    <property type="component" value="Chromosome 1"/>
</dbReference>
<dbReference type="GO" id="GO:0005829">
    <property type="term" value="C:cytosol"/>
    <property type="evidence" value="ECO:0007669"/>
    <property type="project" value="TreeGrafter"/>
</dbReference>
<dbReference type="GO" id="GO:0071949">
    <property type="term" value="F:FAD binding"/>
    <property type="evidence" value="ECO:0007669"/>
    <property type="project" value="InterPro"/>
</dbReference>
<dbReference type="GO" id="GO:0008762">
    <property type="term" value="F:UDP-N-acetylmuramate dehydrogenase activity"/>
    <property type="evidence" value="ECO:0007669"/>
    <property type="project" value="UniProtKB-UniRule"/>
</dbReference>
<dbReference type="GO" id="GO:0051301">
    <property type="term" value="P:cell division"/>
    <property type="evidence" value="ECO:0007669"/>
    <property type="project" value="UniProtKB-KW"/>
</dbReference>
<dbReference type="GO" id="GO:0071555">
    <property type="term" value="P:cell wall organization"/>
    <property type="evidence" value="ECO:0007669"/>
    <property type="project" value="UniProtKB-KW"/>
</dbReference>
<dbReference type="GO" id="GO:0009252">
    <property type="term" value="P:peptidoglycan biosynthetic process"/>
    <property type="evidence" value="ECO:0007669"/>
    <property type="project" value="UniProtKB-UniRule"/>
</dbReference>
<dbReference type="GO" id="GO:0008360">
    <property type="term" value="P:regulation of cell shape"/>
    <property type="evidence" value="ECO:0007669"/>
    <property type="project" value="UniProtKB-KW"/>
</dbReference>
<dbReference type="Gene3D" id="3.30.465.10">
    <property type="match status" value="1"/>
</dbReference>
<dbReference type="Gene3D" id="3.90.78.10">
    <property type="entry name" value="UDP-N-acetylenolpyruvoylglucosamine reductase, C-terminal domain"/>
    <property type="match status" value="1"/>
</dbReference>
<dbReference type="Gene3D" id="3.30.43.10">
    <property type="entry name" value="Uridine Diphospho-n-acetylenolpyruvylglucosamine Reductase, domain 2"/>
    <property type="match status" value="1"/>
</dbReference>
<dbReference type="HAMAP" id="MF_00037">
    <property type="entry name" value="MurB"/>
    <property type="match status" value="1"/>
</dbReference>
<dbReference type="InterPro" id="IPR016166">
    <property type="entry name" value="FAD-bd_PCMH"/>
</dbReference>
<dbReference type="InterPro" id="IPR036318">
    <property type="entry name" value="FAD-bd_PCMH-like_sf"/>
</dbReference>
<dbReference type="InterPro" id="IPR016167">
    <property type="entry name" value="FAD-bd_PCMH_sub1"/>
</dbReference>
<dbReference type="InterPro" id="IPR016169">
    <property type="entry name" value="FAD-bd_PCMH_sub2"/>
</dbReference>
<dbReference type="InterPro" id="IPR003170">
    <property type="entry name" value="MurB"/>
</dbReference>
<dbReference type="InterPro" id="IPR011601">
    <property type="entry name" value="MurB_C"/>
</dbReference>
<dbReference type="InterPro" id="IPR036635">
    <property type="entry name" value="MurB_C_sf"/>
</dbReference>
<dbReference type="InterPro" id="IPR006094">
    <property type="entry name" value="Oxid_FAD_bind_N"/>
</dbReference>
<dbReference type="NCBIfam" id="TIGR00179">
    <property type="entry name" value="murB"/>
    <property type="match status" value="1"/>
</dbReference>
<dbReference type="NCBIfam" id="NF010480">
    <property type="entry name" value="PRK13905.1"/>
    <property type="match status" value="1"/>
</dbReference>
<dbReference type="PANTHER" id="PTHR21071">
    <property type="entry name" value="UDP-N-ACETYLENOLPYRUVOYLGLUCOSAMINE REDUCTASE"/>
    <property type="match status" value="1"/>
</dbReference>
<dbReference type="PANTHER" id="PTHR21071:SF4">
    <property type="entry name" value="UDP-N-ACETYLENOLPYRUVOYLGLUCOSAMINE REDUCTASE"/>
    <property type="match status" value="1"/>
</dbReference>
<dbReference type="Pfam" id="PF01565">
    <property type="entry name" value="FAD_binding_4"/>
    <property type="match status" value="1"/>
</dbReference>
<dbReference type="Pfam" id="PF02873">
    <property type="entry name" value="MurB_C"/>
    <property type="match status" value="1"/>
</dbReference>
<dbReference type="SUPFAM" id="SSF56176">
    <property type="entry name" value="FAD-binding/transporter-associated domain-like"/>
    <property type="match status" value="1"/>
</dbReference>
<dbReference type="SUPFAM" id="SSF56194">
    <property type="entry name" value="Uridine diphospho-N-Acetylenolpyruvylglucosamine reductase, MurB, C-terminal domain"/>
    <property type="match status" value="1"/>
</dbReference>
<dbReference type="PROSITE" id="PS51387">
    <property type="entry name" value="FAD_PCMH"/>
    <property type="match status" value="1"/>
</dbReference>
<feature type="chain" id="PRO_0000224713" description="UDP-N-acetylenolpyruvoylglucosamine reductase">
    <location>
        <begin position="1"/>
        <end position="308"/>
    </location>
</feature>
<feature type="domain" description="FAD-binding PCMH-type" evidence="1">
    <location>
        <begin position="22"/>
        <end position="185"/>
    </location>
</feature>
<feature type="region of interest" description="Disordered" evidence="2">
    <location>
        <begin position="197"/>
        <end position="228"/>
    </location>
</feature>
<feature type="compositionally biased region" description="Basic and acidic residues" evidence="2">
    <location>
        <begin position="197"/>
        <end position="211"/>
    </location>
</feature>
<feature type="compositionally biased region" description="Polar residues" evidence="2">
    <location>
        <begin position="212"/>
        <end position="226"/>
    </location>
</feature>
<feature type="active site" evidence="1">
    <location>
        <position position="165"/>
    </location>
</feature>
<feature type="active site" description="Proton donor" evidence="1">
    <location>
        <position position="214"/>
    </location>
</feature>
<feature type="active site" evidence="1">
    <location>
        <position position="296"/>
    </location>
</feature>
<keyword id="KW-0131">Cell cycle</keyword>
<keyword id="KW-0132">Cell division</keyword>
<keyword id="KW-0133">Cell shape</keyword>
<keyword id="KW-0961">Cell wall biogenesis/degradation</keyword>
<keyword id="KW-0963">Cytoplasm</keyword>
<keyword id="KW-0274">FAD</keyword>
<keyword id="KW-0285">Flavoprotein</keyword>
<keyword id="KW-0521">NADP</keyword>
<keyword id="KW-0560">Oxidoreductase</keyword>
<keyword id="KW-0573">Peptidoglycan synthesis</keyword>
<keyword id="KW-1185">Reference proteome</keyword>
<gene>
    <name evidence="1" type="primary">murB</name>
    <name type="ordered locus">RHOS4_06970</name>
    <name type="ORF">RSP_2110</name>
</gene>